<proteinExistence type="evidence at protein level"/>
<comment type="function">
    <text evidence="1 2 10">Serine/threonine-protein kinase component of the WNK4-SPAK/OSR1 kinase cascade, which acts as a key regulator of ion transport in the distal nephron and blood pressure (By similarity). The WNK4-SPAK/OSR1 kinase cascade is composed of WNK4, which mediates phosphorylation and activation of downstream kinases OXSR1/OSR1 and STK39/SPAK (PubMed:16083423). Following activation, OXSR1/OSR1 and STK39/SPAK catalyze phosphorylation of ion cotransporters, such as SLC12A1/NKCC2, SLC12A2/NKCC1, SLC12A3/NCC, SLC12A5/KCC2 or SLC12A6/KCC3, regulating their activity (By similarity). Acts as a molecular switch that regulates the balance between renal salt reabsorption and K(+) secretion by modulating the activities of renal transporters and channels, including the Na-Cl cotransporter SLC12A3/NCC and the K(+) channel, KCNJ1/ROMK (By similarity). Regulates NaCl reabsorption in the distal nephron by activating the thiazide-sensitive Na-Cl cotransporter SLC12A3/NCC in distal convoluted tubule cells of kidney: activates SLC12A3/NCC in a OXSR1/OSR1- and STK39/SPAK-dependent process (By similarity). Also acts as a scaffold protein independently of its protein kinase activity: negatively regulates cell membrane localization of various transporters and channels (CFTR, KCNJ1/ROMK, SLC4A4, SLC26A9 and TRPV4) by clathrin-dependent endocytosis (By similarity). Also inhibits the activity of the epithelial Na(+) channel (ENaC) SCNN1A, SCNN1B, SCNN1D in a inase-independent mechanism (By similarity). May also phosphorylate NEDD4L (By similarity).</text>
</comment>
<comment type="catalytic activity">
    <reaction evidence="3">
        <text>L-seryl-[protein] + ATP = O-phospho-L-seryl-[protein] + ADP + H(+)</text>
        <dbReference type="Rhea" id="RHEA:17989"/>
        <dbReference type="Rhea" id="RHEA-COMP:9863"/>
        <dbReference type="Rhea" id="RHEA-COMP:11604"/>
        <dbReference type="ChEBI" id="CHEBI:15378"/>
        <dbReference type="ChEBI" id="CHEBI:29999"/>
        <dbReference type="ChEBI" id="CHEBI:30616"/>
        <dbReference type="ChEBI" id="CHEBI:83421"/>
        <dbReference type="ChEBI" id="CHEBI:456216"/>
        <dbReference type="EC" id="2.7.11.1"/>
    </reaction>
</comment>
<comment type="catalytic activity">
    <reaction evidence="10">
        <text>L-threonyl-[protein] + ATP = O-phospho-L-threonyl-[protein] + ADP + H(+)</text>
        <dbReference type="Rhea" id="RHEA:46608"/>
        <dbReference type="Rhea" id="RHEA-COMP:11060"/>
        <dbReference type="Rhea" id="RHEA-COMP:11605"/>
        <dbReference type="ChEBI" id="CHEBI:15378"/>
        <dbReference type="ChEBI" id="CHEBI:30013"/>
        <dbReference type="ChEBI" id="CHEBI:30616"/>
        <dbReference type="ChEBI" id="CHEBI:61977"/>
        <dbReference type="ChEBI" id="CHEBI:456216"/>
        <dbReference type="EC" id="2.7.11.1"/>
    </reaction>
</comment>
<comment type="cofactor">
    <cofactor evidence="3">
        <name>Mg(2+)</name>
        <dbReference type="ChEBI" id="CHEBI:18420"/>
    </cofactor>
</comment>
<comment type="activity regulation">
    <text evidence="1 4 9">Activation requires autophosphorylation of Ser-328 and Ser-332 (PubMed:15883153). Autophosphorylation and subsequent activation is inhibited by increases in intracellular ionic strength: Cl(-) potently inhibits WNK4 kinase activity via direct binding (By similarity). Also inhibited by K(+) ions (By similarity).</text>
</comment>
<comment type="subunit">
    <text evidence="2">Interacts with the C-terminal region of KCNJ1. Interacts with WNK1 and WNK3. Interacts with KLHL3.</text>
</comment>
<comment type="subcellular location">
    <subcellularLocation>
        <location evidence="1">Cell junction</location>
        <location evidence="1">Tight junction</location>
    </subcellularLocation>
    <text evidence="1">Present exclusively in intercellular junctions in the distal convoluted tubule and in both the cytoplasm and intercellular junctions in the cortical collecting duct. WNK4 is part of the tight junction complex.</text>
</comment>
<comment type="domain">
    <text evidence="2">The RFXV motif mediates recognition with downstream kinases OXSR1/OSR1 and STK39/SPAK.</text>
</comment>
<comment type="PTM">
    <text evidence="4 9">Autophosphorylated at Ser-328 and Ser-332, promoting its activation (PubMed:15883153). Phosphorylated by WNK1 and WNK3 (PubMed:15883153). Phosphorylated at Ser-572 in a MAP3K15/ASK3-dependent process in response to osmotic stress or hypotonic low-chloride stimulation (By similarity).</text>
</comment>
<comment type="PTM">
    <text evidence="2">Ubiquitinated by the BCR(KLHL3) complex, leading to its degradation. Also ubiquitinated by the BCR(KLHL2) complex.</text>
</comment>
<comment type="similarity">
    <text evidence="5">Belongs to the protein kinase superfamily. Ser/Thr protein kinase family. WNK subfamily.</text>
</comment>
<comment type="caution">
    <text evidence="3">Was named WNK/'with no lysine(K)' because key residues for catalysis, including the lysine involved in ATP binding, are either not conserved or differ compared to the residues described in other kinase family proteins.</text>
</comment>
<comment type="sequence caution" evidence="12">
    <conflict type="frameshift">
        <sequence resource="EMBL-CDS" id="AAO18238"/>
    </conflict>
</comment>
<keyword id="KW-0067">ATP-binding</keyword>
<keyword id="KW-0965">Cell junction</keyword>
<keyword id="KW-1017">Isopeptide bond</keyword>
<keyword id="KW-0418">Kinase</keyword>
<keyword id="KW-0547">Nucleotide-binding</keyword>
<keyword id="KW-0597">Phosphoprotein</keyword>
<keyword id="KW-1185">Reference proteome</keyword>
<keyword id="KW-0723">Serine/threonine-protein kinase</keyword>
<keyword id="KW-0796">Tight junction</keyword>
<keyword id="KW-0808">Transferase</keyword>
<keyword id="KW-0832">Ubl conjugation</keyword>
<reference evidence="12" key="1">
    <citation type="journal article" date="2003" name="Hypertension">
        <title>The role of Wnk4 in polygenic hypertension: a candidate gene analysis on rat chromosome 10.</title>
        <authorList>
            <person name="Monti J."/>
            <person name="Zimdahl H."/>
            <person name="Schulz H."/>
            <person name="Plehm R."/>
            <person name="Ganten D."/>
            <person name="Hubner N."/>
        </authorList>
    </citation>
    <scope>NUCLEOTIDE SEQUENCE [MRNA]</scope>
    <source>
        <strain evidence="7">Wistar Kyoto</strain>
        <tissue evidence="14">Kidney</tissue>
    </source>
</reference>
<reference evidence="12" key="2">
    <citation type="journal article" date="2003" name="Nat. Genet.">
        <title>WNK4 regulates the balance between renal NaCl reabsorption and K+ secretion.</title>
        <authorList>
            <person name="Kahle K.T."/>
            <person name="Wilson F.H."/>
            <person name="Leng Q."/>
            <person name="Lalioti M.D."/>
            <person name="O'Connell A.D."/>
            <person name="Dong K."/>
            <person name="Rapson A.K."/>
            <person name="MacGregor G.G."/>
            <person name="Giebisch G."/>
            <person name="Hebert S.C."/>
            <person name="Lifton R.P."/>
        </authorList>
    </citation>
    <scope>NUCLEOTIDE SEQUENCE [MRNA]</scope>
    <source>
        <strain evidence="8">Wistar Kyoto</strain>
        <tissue evidence="15">Kidney</tissue>
    </source>
</reference>
<reference key="3">
    <citation type="journal article" date="2005" name="Biochem. J.">
        <title>The WNK1 and WNK4 protein kinases that are mutated in Gordon's hypertension syndrome phosphorylate and activate SPAK and OSR1 protein kinases.</title>
        <authorList>
            <person name="Vitari A.C."/>
            <person name="Deak M."/>
            <person name="Morrice N.A."/>
            <person name="Alessi D.R."/>
        </authorList>
    </citation>
    <scope>FUNCTION</scope>
    <scope>CATALYTIC ACTIVITY</scope>
    <scope>ACTIVE SITE</scope>
    <scope>MUTAGENESIS OF LYS-183 AND ASP-318</scope>
</reference>
<reference key="4">
    <citation type="journal article" date="2005" name="J. Biol. Chem.">
        <title>Properties of WNK1 and implications for other family members.</title>
        <authorList>
            <person name="Lenertz L.Y."/>
            <person name="Lee B.H."/>
            <person name="Min X."/>
            <person name="Xu B.E."/>
            <person name="Wedin K."/>
            <person name="Earnest S."/>
            <person name="Goldsmith E.J."/>
            <person name="Cobb M.H."/>
        </authorList>
    </citation>
    <scope>ACTIVITY REGULATION</scope>
    <scope>PHOSPHORYLATION AT SER-332</scope>
</reference>
<reference key="5">
    <citation type="journal article" date="2012" name="Nat. Commun.">
        <title>Quantitative maps of protein phosphorylation sites across 14 different rat organs and tissues.</title>
        <authorList>
            <person name="Lundby A."/>
            <person name="Secher A."/>
            <person name="Lage K."/>
            <person name="Nordsborg N.B."/>
            <person name="Dmytriyev A."/>
            <person name="Lundby C."/>
            <person name="Olsen J.V."/>
        </authorList>
    </citation>
    <scope>PHOSPHORYLATION [LARGE SCALE ANALYSIS] AT SER-1014</scope>
    <scope>IDENTIFICATION BY MASS SPECTROMETRY [LARGE SCALE ANALYSIS]</scope>
</reference>
<evidence type="ECO:0000250" key="1">
    <source>
        <dbReference type="UniProtKB" id="Q80UE6"/>
    </source>
</evidence>
<evidence type="ECO:0000250" key="2">
    <source>
        <dbReference type="UniProtKB" id="Q96J92"/>
    </source>
</evidence>
<evidence type="ECO:0000250" key="3">
    <source>
        <dbReference type="UniProtKB" id="Q9H4A3"/>
    </source>
</evidence>
<evidence type="ECO:0000250" key="4">
    <source>
        <dbReference type="UniProtKB" id="Q9JIH7"/>
    </source>
</evidence>
<evidence type="ECO:0000255" key="5">
    <source>
        <dbReference type="PROSITE-ProRule" id="PRU00159"/>
    </source>
</evidence>
<evidence type="ECO:0000256" key="6">
    <source>
        <dbReference type="SAM" id="MobiDB-lite"/>
    </source>
</evidence>
<evidence type="ECO:0000269" key="7">
    <source>
    </source>
</evidence>
<evidence type="ECO:0000269" key="8">
    <source>
    </source>
</evidence>
<evidence type="ECO:0000269" key="9">
    <source>
    </source>
</evidence>
<evidence type="ECO:0000269" key="10">
    <source>
    </source>
</evidence>
<evidence type="ECO:0000303" key="11">
    <source>
    </source>
</evidence>
<evidence type="ECO:0000305" key="12"/>
<evidence type="ECO:0000305" key="13">
    <source>
    </source>
</evidence>
<evidence type="ECO:0000312" key="14">
    <source>
        <dbReference type="EMBL" id="AAO18238.1"/>
    </source>
</evidence>
<evidence type="ECO:0000312" key="15">
    <source>
        <dbReference type="EMBL" id="AAO38858.1"/>
    </source>
</evidence>
<evidence type="ECO:0000312" key="16">
    <source>
        <dbReference type="RGD" id="631401"/>
    </source>
</evidence>
<evidence type="ECO:0007744" key="17">
    <source>
    </source>
</evidence>
<sequence length="1222" mass="132833">MLAPRNTETGVHMSQTEADLALRPSPSLTSMGPTRLGPPPRRVRRFSGKAEPRPRSSRPSRRSSVDLGLLSSWSQPASLLPEPPDPPDSAGPMRSPPSNSKEHPEGTWTGAAPVKAADSACPELTVSSGGPGSREPPRVPDAAARERRREQEEKEDTETQAVATSPDGRYLKFDIEIGRGSFKTVYRGLDTDTTVEVAWCELQTRKLSRAERQRFSEEVEMLKGLQHPNIVRFYDSWKSVLRGQVCIVLVTELMTSGTLKTYLRRFREMKPRVLQRWSRQILRGLHFLHSRVPPILHRDLKCDNVFITGPSGSVKIGDLGLATLKRASFAKSVIGTPEFMAPEMYEEKYDEAVDVYAFGMCMLEMATSEYPYSECQNAAQIYRKVTSGTKPNSFYKVKMPEVKEIIEGCIRTDKNERFTIQDLLTHAFFREERGVHVELAEEDDGEKPGLKLWLRMEDARRGGRPRDNQAIEFLFQLGRDAAEEVAQEMVALGLVCEADYQPVARAVRERVAAIQRKREKLRKARELEVLPPDSGPPPATVSMTPGPPSAFPPEPEEPEADQHQSFLFRHASYSSTTSDCETDGYLSSSGFLDASDPALQPPGGMPSSPAEPHLCLPSGFALSIPRSGPGSDFSPGDSYASDAASGLSDMGEGGQMRKNPVKTLRRRPRSRLRVTSVSDQSDRVVECQLQTHNSKMVTFRFDLDGDSPEEIAAAMVYNEFILPSERDGFLSRIREIIQRVETLLKRDAGPSEATEDALSPQEEPAAMPALPGPSDAELQRSISPEQRSWAAFSTSPSSPGTPLSPGTPFSPGTPPVFPCPIFPITSPSCHPYPFSQVSSNPCPQAPSSLLPSSSGASQVPFPSPSLPTSSPLPFSPSYPQVPLHPASLPTCPSPPPLPSTTAAPLLSLASAFSLAVMTVAQSLLSPSPGLLSQSPPAPPGPLPSMPLPLASCDQESLSAQTAETENEASRNPAQPLLGDARLAPISEEGKPQLVGRFQVTSSKEPAEPPLQPASPTLSRSLKLPTPQLTSESSDTEDSAAGGPETREALAESDRAAEGLGVAIDEEKDEGKEPQIGGSSPILSQPSPVWMNYSYSSLCLSSEESESSGEDEEFWAELQNLRQKHLSEVEALQTLQKKEIEDLYSRLGKQPPPGIVAPAAMLSCRQRRLSKGSFPTSRRNSLQRSDLPGPGIMRRNSLSGSSTGSQEQRASKGVTFAGDVGRM</sequence>
<organism>
    <name type="scientific">Rattus norvegicus</name>
    <name type="common">Rat</name>
    <dbReference type="NCBI Taxonomy" id="10116"/>
    <lineage>
        <taxon>Eukaryota</taxon>
        <taxon>Metazoa</taxon>
        <taxon>Chordata</taxon>
        <taxon>Craniata</taxon>
        <taxon>Vertebrata</taxon>
        <taxon>Euteleostomi</taxon>
        <taxon>Mammalia</taxon>
        <taxon>Eutheria</taxon>
        <taxon>Euarchontoglires</taxon>
        <taxon>Glires</taxon>
        <taxon>Rodentia</taxon>
        <taxon>Myomorpha</taxon>
        <taxon>Muroidea</taxon>
        <taxon>Muridae</taxon>
        <taxon>Murinae</taxon>
        <taxon>Rattus</taxon>
    </lineage>
</organism>
<feature type="chain" id="PRO_0000086826" description="Serine/threonine-protein kinase WNK4">
    <location>
        <begin position="1"/>
        <end position="1222"/>
    </location>
</feature>
<feature type="domain" description="Protein kinase" evidence="5">
    <location>
        <begin position="171"/>
        <end position="429"/>
    </location>
</feature>
<feature type="region of interest" description="Disordered" evidence="6">
    <location>
        <begin position="1"/>
        <end position="163"/>
    </location>
</feature>
<feature type="region of interest" description="Disordered" evidence="6">
    <location>
        <begin position="527"/>
        <end position="562"/>
    </location>
</feature>
<feature type="region of interest" description="Interaction with KLHL3" evidence="2">
    <location>
        <begin position="554"/>
        <end position="564"/>
    </location>
</feature>
<feature type="region of interest" description="Disordered" evidence="6">
    <location>
        <begin position="591"/>
        <end position="612"/>
    </location>
</feature>
<feature type="region of interest" description="Disordered" evidence="6">
    <location>
        <begin position="626"/>
        <end position="679"/>
    </location>
</feature>
<feature type="region of interest" description="Disordered" evidence="6">
    <location>
        <begin position="747"/>
        <end position="809"/>
    </location>
</feature>
<feature type="region of interest" description="Disordered" evidence="6">
    <location>
        <begin position="836"/>
        <end position="873"/>
    </location>
</feature>
<feature type="region of interest" description="Disordered" evidence="6">
    <location>
        <begin position="927"/>
        <end position="1087"/>
    </location>
</feature>
<feature type="region of interest" description="Disordered" evidence="6">
    <location>
        <begin position="1169"/>
        <end position="1222"/>
    </location>
</feature>
<feature type="short sequence motif" description="RFXV motif" evidence="2">
    <location>
        <begin position="996"/>
        <end position="999"/>
    </location>
</feature>
<feature type="compositionally biased region" description="Polar residues" evidence="6">
    <location>
        <begin position="1"/>
        <end position="17"/>
    </location>
</feature>
<feature type="compositionally biased region" description="Basic and acidic residues" evidence="6">
    <location>
        <begin position="135"/>
        <end position="152"/>
    </location>
</feature>
<feature type="compositionally biased region" description="Pro residues" evidence="6">
    <location>
        <begin position="533"/>
        <end position="553"/>
    </location>
</feature>
<feature type="compositionally biased region" description="Low complexity" evidence="6">
    <location>
        <begin position="627"/>
        <end position="638"/>
    </location>
</feature>
<feature type="compositionally biased region" description="Basic residues" evidence="6">
    <location>
        <begin position="659"/>
        <end position="672"/>
    </location>
</feature>
<feature type="compositionally biased region" description="Low complexity" evidence="6">
    <location>
        <begin position="792"/>
        <end position="809"/>
    </location>
</feature>
<feature type="compositionally biased region" description="Low complexity" evidence="6">
    <location>
        <begin position="845"/>
        <end position="873"/>
    </location>
</feature>
<feature type="compositionally biased region" description="Pro residues" evidence="6">
    <location>
        <begin position="935"/>
        <end position="946"/>
    </location>
</feature>
<feature type="compositionally biased region" description="Polar residues" evidence="6">
    <location>
        <begin position="953"/>
        <end position="963"/>
    </location>
</feature>
<feature type="compositionally biased region" description="Basic and acidic residues" evidence="6">
    <location>
        <begin position="1044"/>
        <end position="1056"/>
    </location>
</feature>
<feature type="compositionally biased region" description="Polar residues" evidence="6">
    <location>
        <begin position="1076"/>
        <end position="1086"/>
    </location>
</feature>
<feature type="compositionally biased region" description="Polar residues" evidence="6">
    <location>
        <begin position="1172"/>
        <end position="1183"/>
    </location>
</feature>
<feature type="compositionally biased region" description="Polar residues" evidence="6">
    <location>
        <begin position="1195"/>
        <end position="1207"/>
    </location>
</feature>
<feature type="active site" description="Proton acceptor" evidence="13">
    <location>
        <position position="318"/>
    </location>
</feature>
<feature type="binding site" evidence="3">
    <location>
        <position position="181"/>
    </location>
    <ligand>
        <name>ATP</name>
        <dbReference type="ChEBI" id="CHEBI:30616"/>
    </ligand>
</feature>
<feature type="binding site" evidence="3">
    <location>
        <begin position="251"/>
        <end position="254"/>
    </location>
    <ligand>
        <name>ATP</name>
        <dbReference type="ChEBI" id="CHEBI:30616"/>
    </ligand>
</feature>
<feature type="binding site" evidence="3">
    <location>
        <position position="301"/>
    </location>
    <ligand>
        <name>ATP</name>
        <dbReference type="ChEBI" id="CHEBI:30616"/>
    </ligand>
</feature>
<feature type="modified residue" description="Phosphoserine" evidence="2">
    <location>
        <position position="95"/>
    </location>
</feature>
<feature type="modified residue" description="Phosphoserine; by autocatalysis" evidence="4">
    <location>
        <position position="328"/>
    </location>
</feature>
<feature type="modified residue" description="Phosphoserine; by autocatalysis" evidence="9">
    <location>
        <position position="332"/>
    </location>
</feature>
<feature type="modified residue" description="Phosphoserine" evidence="2">
    <location>
        <position position="572"/>
    </location>
</feature>
<feature type="modified residue" description="Phosphoserine" evidence="17">
    <location>
        <position position="1014"/>
    </location>
</feature>
<feature type="modified residue" description="Phosphoserine" evidence="1">
    <location>
        <position position="1196"/>
    </location>
</feature>
<feature type="cross-link" description="Glycyl lysine isopeptide (Lys-Gly) (interchain with G-Cter in ubiquitin)" evidence="2">
    <location>
        <position position="154"/>
    </location>
</feature>
<feature type="cross-link" description="Glycyl lysine isopeptide (Lys-Gly) (interchain with G-Cter in ubiquitin)" evidence="2">
    <location>
        <position position="172"/>
    </location>
</feature>
<feature type="cross-link" description="Glycyl lysine isopeptide (Lys-Gly) (interchain with G-Cter in ubiquitin)" evidence="2">
    <location>
        <position position="183"/>
    </location>
</feature>
<feature type="cross-link" description="Glycyl lysine isopeptide (Lys-Gly) (interchain with G-Cter in ubiquitin)" evidence="2">
    <location>
        <position position="223"/>
    </location>
</feature>
<feature type="cross-link" description="Glycyl lysine isopeptide (Lys-Gly) (interchain with G-Cter in ubiquitin)" evidence="2">
    <location>
        <position position="238"/>
    </location>
</feature>
<feature type="cross-link" description="Glycyl lysine isopeptide (Lys-Gly) (interchain with G-Cter in ubiquitin)" evidence="2">
    <location>
        <position position="325"/>
    </location>
</feature>
<feature type="cross-link" description="Glycyl lysine isopeptide (Lys-Gly) (interchain with G-Cter in ubiquitin)" evidence="2">
    <location>
        <position position="384"/>
    </location>
</feature>
<feature type="cross-link" description="Glycyl lysine isopeptide (Lys-Gly) (interchain with G-Cter in ubiquitin)" evidence="2">
    <location>
        <position position="390"/>
    </location>
</feature>
<feature type="cross-link" description="Glycyl lysine isopeptide (Lys-Gly) (interchain with G-Cter in ubiquitin)" evidence="2">
    <location>
        <position position="447"/>
    </location>
</feature>
<feature type="cross-link" description="Glycyl lysine isopeptide (Lys-Gly) (interchain with G-Cter in ubiquitin)" evidence="2">
    <location>
        <position position="451"/>
    </location>
</feature>
<feature type="cross-link" description="Glycyl lysine isopeptide (Lys-Gly) (interchain with G-Cter in ubiquitin)" evidence="2">
    <location>
        <position position="990"/>
    </location>
</feature>
<feature type="cross-link" description="Glycyl lysine isopeptide (Lys-Gly) (interchain with G-Cter in ubiquitin)" evidence="2">
    <location>
        <position position="1123"/>
    </location>
</feature>
<feature type="cross-link" description="Glycyl lysine isopeptide (Lys-Gly) (interchain with G-Cter in ubiquitin)" evidence="2">
    <location>
        <position position="1136"/>
    </location>
</feature>
<feature type="cross-link" description="Glycyl lysine isopeptide (Lys-Gly) (interchain with G-Cter in ubiquitin)" evidence="2">
    <location>
        <position position="1137"/>
    </location>
</feature>
<feature type="mutagenesis site" description="Abolished serine/threonine-protein kinase activity and ability to phosphorylate OXSR1/OSR1 and STK39/SPAK; when associated with A-318." evidence="10">
    <original>K</original>
    <variation>A</variation>
    <location>
        <position position="183"/>
    </location>
</feature>
<feature type="mutagenesis site" description="Abolished serine/threonine-protein kinase activity and ability to phosphorylate OXSR1/OSR1 and STK39/SPAK; when associated with A-183." evidence="10">
    <original>D</original>
    <variation>A</variation>
    <location>
        <position position="318"/>
    </location>
</feature>
<feature type="sequence conflict" description="In Ref. 1; AAO18238." evidence="12" ref="1">
    <original>T</original>
    <variation>R</variation>
    <location>
        <position position="9"/>
    </location>
</feature>
<feature type="sequence conflict" description="In Ref. 1; AAO18238." evidence="12" ref="1">
    <original>T</original>
    <variation>A</variation>
    <location>
        <position position="204"/>
    </location>
</feature>
<feature type="sequence conflict" description="In Ref. 1; AAO18238." evidence="12" ref="1">
    <original>P</original>
    <variation>A</variation>
    <location>
        <position position="764"/>
    </location>
</feature>
<feature type="sequence conflict" description="In Ref. 1; AAO18238." evidence="12" ref="1">
    <original>A</original>
    <variation>E</variation>
    <location>
        <position position="776"/>
    </location>
</feature>
<feature type="sequence conflict" description="In Ref. 1; AAO18238." evidence="12" ref="1">
    <original>R</original>
    <variation>K</variation>
    <location>
        <position position="1194"/>
    </location>
</feature>
<accession>Q7TPK6</accession>
<accession>Q810H4</accession>
<accession>Q811R5</accession>
<name>WNK4_RAT</name>
<gene>
    <name evidence="16" type="primary">Wnk4</name>
    <name evidence="11" type="synonym">Prkwnk4</name>
</gene>
<protein>
    <recommendedName>
        <fullName evidence="12">Serine/threonine-protein kinase WNK4</fullName>
        <ecNumber evidence="10">2.7.11.1</ecNumber>
    </recommendedName>
    <alternativeName>
        <fullName evidence="16">Protein kinase lysine-deficient 4</fullName>
    </alternativeName>
    <alternativeName>
        <fullName evidence="12">Protein kinase with no lysine 4</fullName>
    </alternativeName>
</protein>
<dbReference type="EC" id="2.7.11.1" evidence="10"/>
<dbReference type="EMBL" id="AY187039">
    <property type="protein sequence ID" value="AAO18238.1"/>
    <property type="status" value="ALT_FRAME"/>
    <property type="molecule type" value="mRNA"/>
</dbReference>
<dbReference type="EMBL" id="AY192567">
    <property type="protein sequence ID" value="AAO38858.1"/>
    <property type="molecule type" value="mRNA"/>
</dbReference>
<dbReference type="RefSeq" id="NP_783169.2">
    <property type="nucleotide sequence ID" value="NM_175579.3"/>
</dbReference>
<dbReference type="SMR" id="Q7TPK6"/>
<dbReference type="DIP" id="DIP-59689N"/>
<dbReference type="FunCoup" id="Q7TPK6">
    <property type="interactions" value="303"/>
</dbReference>
<dbReference type="IntAct" id="Q7TPK6">
    <property type="interactions" value="1"/>
</dbReference>
<dbReference type="STRING" id="10116.ENSRNOP00000027770"/>
<dbReference type="iPTMnet" id="Q7TPK6"/>
<dbReference type="PhosphoSitePlus" id="Q7TPK6"/>
<dbReference type="PaxDb" id="10116-ENSRNOP00000027770"/>
<dbReference type="Ensembl" id="ENSRNOT00000027770.8">
    <property type="protein sequence ID" value="ENSRNOP00000027770.5"/>
    <property type="gene ID" value="ENSRNOG00000020441.9"/>
</dbReference>
<dbReference type="GeneID" id="287715"/>
<dbReference type="KEGG" id="rno:287715"/>
<dbReference type="UCSC" id="RGD:631401">
    <property type="organism name" value="rat"/>
</dbReference>
<dbReference type="AGR" id="RGD:631401"/>
<dbReference type="CTD" id="65266"/>
<dbReference type="RGD" id="631401">
    <property type="gene designation" value="Wnk4"/>
</dbReference>
<dbReference type="eggNOG" id="KOG0584">
    <property type="taxonomic scope" value="Eukaryota"/>
</dbReference>
<dbReference type="GeneTree" id="ENSGT00940000159871"/>
<dbReference type="InParanoid" id="Q7TPK6"/>
<dbReference type="OrthoDB" id="4062651at2759"/>
<dbReference type="PhylomeDB" id="Q7TPK6"/>
<dbReference type="TreeFam" id="TF315363"/>
<dbReference type="PRO" id="PR:Q7TPK6"/>
<dbReference type="Proteomes" id="UP000002494">
    <property type="component" value="Chromosome 10"/>
</dbReference>
<dbReference type="Bgee" id="ENSRNOG00000020441">
    <property type="expression patterns" value="Expressed in kidney and 19 other cell types or tissues"/>
</dbReference>
<dbReference type="ExpressionAtlas" id="Q7TPK6">
    <property type="expression patterns" value="baseline and differential"/>
</dbReference>
<dbReference type="GO" id="GO:0005923">
    <property type="term" value="C:bicellular tight junction"/>
    <property type="evidence" value="ECO:0000250"/>
    <property type="project" value="UniProtKB"/>
</dbReference>
<dbReference type="GO" id="GO:0044297">
    <property type="term" value="C:cell body"/>
    <property type="evidence" value="ECO:0000266"/>
    <property type="project" value="RGD"/>
</dbReference>
<dbReference type="GO" id="GO:0005737">
    <property type="term" value="C:cytoplasm"/>
    <property type="evidence" value="ECO:0000266"/>
    <property type="project" value="RGD"/>
</dbReference>
<dbReference type="GO" id="GO:0005829">
    <property type="term" value="C:cytosol"/>
    <property type="evidence" value="ECO:0000314"/>
    <property type="project" value="ParkinsonsUK-UCL"/>
</dbReference>
<dbReference type="GO" id="GO:0016020">
    <property type="term" value="C:membrane"/>
    <property type="evidence" value="ECO:0000314"/>
    <property type="project" value="ParkinsonsUK-UCL"/>
</dbReference>
<dbReference type="GO" id="GO:0032991">
    <property type="term" value="C:protein-containing complex"/>
    <property type="evidence" value="ECO:0000266"/>
    <property type="project" value="RGD"/>
</dbReference>
<dbReference type="GO" id="GO:0005524">
    <property type="term" value="F:ATP binding"/>
    <property type="evidence" value="ECO:0000250"/>
    <property type="project" value="UniProtKB"/>
</dbReference>
<dbReference type="GO" id="GO:0031404">
    <property type="term" value="F:chloride ion binding"/>
    <property type="evidence" value="ECO:0000266"/>
    <property type="project" value="RGD"/>
</dbReference>
<dbReference type="GO" id="GO:0008200">
    <property type="term" value="F:ion channel inhibitor activity"/>
    <property type="evidence" value="ECO:0000250"/>
    <property type="project" value="UniProtKB"/>
</dbReference>
<dbReference type="GO" id="GO:0019870">
    <property type="term" value="F:potassium channel inhibitor activity"/>
    <property type="evidence" value="ECO:0000318"/>
    <property type="project" value="GO_Central"/>
</dbReference>
<dbReference type="GO" id="GO:0106310">
    <property type="term" value="F:protein serine kinase activity"/>
    <property type="evidence" value="ECO:0007669"/>
    <property type="project" value="RHEA"/>
</dbReference>
<dbReference type="GO" id="GO:0004674">
    <property type="term" value="F:protein serine/threonine kinase activity"/>
    <property type="evidence" value="ECO:0000314"/>
    <property type="project" value="RGD"/>
</dbReference>
<dbReference type="GO" id="GO:0035932">
    <property type="term" value="P:aldosterone secretion"/>
    <property type="evidence" value="ECO:0000266"/>
    <property type="project" value="RGD"/>
</dbReference>
<dbReference type="GO" id="GO:0055074">
    <property type="term" value="P:calcium ion homeostasis"/>
    <property type="evidence" value="ECO:0000266"/>
    <property type="project" value="RGD"/>
</dbReference>
<dbReference type="GO" id="GO:0071466">
    <property type="term" value="P:cellular response to xenobiotic stimulus"/>
    <property type="evidence" value="ECO:0000266"/>
    <property type="project" value="RGD"/>
</dbReference>
<dbReference type="GO" id="GO:0006821">
    <property type="term" value="P:chloride transport"/>
    <property type="evidence" value="ECO:0000266"/>
    <property type="project" value="RGD"/>
</dbReference>
<dbReference type="GO" id="GO:0072156">
    <property type="term" value="P:distal tubule morphogenesis"/>
    <property type="evidence" value="ECO:0000250"/>
    <property type="project" value="UniProtKB"/>
</dbReference>
<dbReference type="GO" id="GO:0070371">
    <property type="term" value="P:ERK1 and ERK2 cascade"/>
    <property type="evidence" value="ECO:0000266"/>
    <property type="project" value="RGD"/>
</dbReference>
<dbReference type="GO" id="GO:0010467">
    <property type="term" value="P:gene expression"/>
    <property type="evidence" value="ECO:0000266"/>
    <property type="project" value="RGD"/>
</dbReference>
<dbReference type="GO" id="GO:0006954">
    <property type="term" value="P:inflammatory response"/>
    <property type="evidence" value="ECO:0000266"/>
    <property type="project" value="RGD"/>
</dbReference>
<dbReference type="GO" id="GO:0030644">
    <property type="term" value="P:intracellular chloride ion homeostasis"/>
    <property type="evidence" value="ECO:0000266"/>
    <property type="project" value="RGD"/>
</dbReference>
<dbReference type="GO" id="GO:0035556">
    <property type="term" value="P:intracellular signal transduction"/>
    <property type="evidence" value="ECO:0000250"/>
    <property type="project" value="UniProtKB"/>
</dbReference>
<dbReference type="GO" id="GO:0042116">
    <property type="term" value="P:macrophage activation"/>
    <property type="evidence" value="ECO:0000266"/>
    <property type="project" value="RGD"/>
</dbReference>
<dbReference type="GO" id="GO:0050801">
    <property type="term" value="P:monoatomic ion homeostasis"/>
    <property type="evidence" value="ECO:0000250"/>
    <property type="project" value="UniProtKB"/>
</dbReference>
<dbReference type="GO" id="GO:0090188">
    <property type="term" value="P:negative regulation of pancreatic juice secretion"/>
    <property type="evidence" value="ECO:0000266"/>
    <property type="project" value="RGD"/>
</dbReference>
<dbReference type="GO" id="GO:1903077">
    <property type="term" value="P:negative regulation of protein localization to plasma membrane"/>
    <property type="evidence" value="ECO:0000250"/>
    <property type="project" value="UniProtKB"/>
</dbReference>
<dbReference type="GO" id="GO:0010766">
    <property type="term" value="P:negative regulation of sodium ion transport"/>
    <property type="evidence" value="ECO:0000314"/>
    <property type="project" value="UniProtKB"/>
</dbReference>
<dbReference type="GO" id="GO:1903288">
    <property type="term" value="P:positive regulation of potassium ion import across plasma membrane"/>
    <property type="evidence" value="ECO:0000318"/>
    <property type="project" value="GO_Central"/>
</dbReference>
<dbReference type="GO" id="GO:0071805">
    <property type="term" value="P:potassium ion transmembrane transport"/>
    <property type="evidence" value="ECO:0000266"/>
    <property type="project" value="RGD"/>
</dbReference>
<dbReference type="GO" id="GO:0008104">
    <property type="term" value="P:protein localization"/>
    <property type="evidence" value="ECO:0000266"/>
    <property type="project" value="RGD"/>
</dbReference>
<dbReference type="GO" id="GO:0006468">
    <property type="term" value="P:protein phosphorylation"/>
    <property type="evidence" value="ECO:0000250"/>
    <property type="project" value="UniProtKB"/>
</dbReference>
<dbReference type="GO" id="GO:0008217">
    <property type="term" value="P:regulation of blood pressure"/>
    <property type="evidence" value="ECO:0000266"/>
    <property type="project" value="RGD"/>
</dbReference>
<dbReference type="GO" id="GO:1903764">
    <property type="term" value="P:regulation of potassium ion export across plasma membrane"/>
    <property type="evidence" value="ECO:0000266"/>
    <property type="project" value="RGD"/>
</dbReference>
<dbReference type="GO" id="GO:0070294">
    <property type="term" value="P:renal sodium ion absorption"/>
    <property type="evidence" value="ECO:0000250"/>
    <property type="project" value="UniProtKB"/>
</dbReference>
<dbReference type="GO" id="GO:0003096">
    <property type="term" value="P:renal sodium ion transport"/>
    <property type="evidence" value="ECO:0000250"/>
    <property type="project" value="UniProtKB"/>
</dbReference>
<dbReference type="GO" id="GO:0002021">
    <property type="term" value="P:response to dietary excess"/>
    <property type="evidence" value="ECO:0000266"/>
    <property type="project" value="RGD"/>
</dbReference>
<dbReference type="GO" id="GO:0009410">
    <property type="term" value="P:response to xenobiotic stimulus"/>
    <property type="evidence" value="ECO:0000266"/>
    <property type="project" value="RGD"/>
</dbReference>
<dbReference type="GO" id="GO:0007165">
    <property type="term" value="P:signal transduction"/>
    <property type="evidence" value="ECO:0000266"/>
    <property type="project" value="RGD"/>
</dbReference>
<dbReference type="GO" id="GO:0035725">
    <property type="term" value="P:sodium ion transmembrane transport"/>
    <property type="evidence" value="ECO:0000266"/>
    <property type="project" value="RGD"/>
</dbReference>
<dbReference type="CDD" id="cd14033">
    <property type="entry name" value="STKc_WNK4"/>
    <property type="match status" value="1"/>
</dbReference>
<dbReference type="FunFam" id="3.10.20.90:FF:000007">
    <property type="entry name" value="Serine/threonine-protein kinase WNK1 isoform 1"/>
    <property type="match status" value="1"/>
</dbReference>
<dbReference type="FunFam" id="1.10.510.10:FF:000006">
    <property type="entry name" value="Serine/threonine-protein kinase WNK1 isoform 2"/>
    <property type="match status" value="1"/>
</dbReference>
<dbReference type="FunFam" id="3.30.200.20:FF:000010">
    <property type="entry name" value="Serine/threonine-protein kinase WNK1 isoform 2"/>
    <property type="match status" value="1"/>
</dbReference>
<dbReference type="FunFam" id="3.10.20.90:FF:000127">
    <property type="entry name" value="serine/threonine-protein kinase WNK4 isoform X1"/>
    <property type="match status" value="1"/>
</dbReference>
<dbReference type="Gene3D" id="3.10.20.90">
    <property type="entry name" value="Phosphatidylinositol 3-kinase Catalytic Subunit, Chain A, domain 1"/>
    <property type="match status" value="2"/>
</dbReference>
<dbReference type="Gene3D" id="3.30.200.20">
    <property type="entry name" value="Phosphorylase Kinase, domain 1"/>
    <property type="match status" value="1"/>
</dbReference>
<dbReference type="Gene3D" id="1.10.510.10">
    <property type="entry name" value="Transferase(Phosphotransferase) domain 1"/>
    <property type="match status" value="1"/>
</dbReference>
<dbReference type="InterPro" id="IPR056865">
    <property type="entry name" value="CCTL2_WNK"/>
</dbReference>
<dbReference type="InterPro" id="IPR011009">
    <property type="entry name" value="Kinase-like_dom_sf"/>
</dbReference>
<dbReference type="InterPro" id="IPR024678">
    <property type="entry name" value="Kinase_OSR1/WNK_CCT"/>
</dbReference>
<dbReference type="InterPro" id="IPR000719">
    <property type="entry name" value="Prot_kinase_dom"/>
</dbReference>
<dbReference type="InterPro" id="IPR008271">
    <property type="entry name" value="Ser/Thr_kinase_AS"/>
</dbReference>
<dbReference type="InterPro" id="IPR050588">
    <property type="entry name" value="WNK_Ser-Thr_kinase"/>
</dbReference>
<dbReference type="PANTHER" id="PTHR13902">
    <property type="entry name" value="SERINE/THREONINE-PROTEIN KINASE WNK WITH NO LYSINE -RELATED"/>
    <property type="match status" value="1"/>
</dbReference>
<dbReference type="Pfam" id="PF24889">
    <property type="entry name" value="CCTL2_WNK"/>
    <property type="match status" value="1"/>
</dbReference>
<dbReference type="Pfam" id="PF12202">
    <property type="entry name" value="OSR1_C"/>
    <property type="match status" value="1"/>
</dbReference>
<dbReference type="Pfam" id="PF00069">
    <property type="entry name" value="Pkinase"/>
    <property type="match status" value="1"/>
</dbReference>
<dbReference type="SMART" id="SM00220">
    <property type="entry name" value="S_TKc"/>
    <property type="match status" value="1"/>
</dbReference>
<dbReference type="SUPFAM" id="SSF56112">
    <property type="entry name" value="Protein kinase-like (PK-like)"/>
    <property type="match status" value="1"/>
</dbReference>
<dbReference type="PROSITE" id="PS50011">
    <property type="entry name" value="PROTEIN_KINASE_DOM"/>
    <property type="match status" value="1"/>
</dbReference>
<dbReference type="PROSITE" id="PS00108">
    <property type="entry name" value="PROTEIN_KINASE_ST"/>
    <property type="match status" value="1"/>
</dbReference>